<accession>Q3SEU5</accession>
<gene>
    <name evidence="1" type="primary">hisB</name>
    <name type="ordered locus">Tbd_1711</name>
</gene>
<dbReference type="EC" id="4.2.1.19" evidence="1"/>
<dbReference type="EMBL" id="CP000116">
    <property type="protein sequence ID" value="AAZ97664.1"/>
    <property type="molecule type" value="Genomic_DNA"/>
</dbReference>
<dbReference type="RefSeq" id="WP_011312223.1">
    <property type="nucleotide sequence ID" value="NC_007404.1"/>
</dbReference>
<dbReference type="SMR" id="Q3SEU5"/>
<dbReference type="STRING" id="292415.Tbd_1711"/>
<dbReference type="KEGG" id="tbd:Tbd_1711"/>
<dbReference type="eggNOG" id="COG0131">
    <property type="taxonomic scope" value="Bacteria"/>
</dbReference>
<dbReference type="HOGENOM" id="CLU_044308_2_0_4"/>
<dbReference type="OrthoDB" id="9790411at2"/>
<dbReference type="UniPathway" id="UPA00031">
    <property type="reaction ID" value="UER00011"/>
</dbReference>
<dbReference type="Proteomes" id="UP000008291">
    <property type="component" value="Chromosome"/>
</dbReference>
<dbReference type="GO" id="GO:0005737">
    <property type="term" value="C:cytoplasm"/>
    <property type="evidence" value="ECO:0007669"/>
    <property type="project" value="UniProtKB-SubCell"/>
</dbReference>
<dbReference type="GO" id="GO:0004424">
    <property type="term" value="F:imidazoleglycerol-phosphate dehydratase activity"/>
    <property type="evidence" value="ECO:0007669"/>
    <property type="project" value="UniProtKB-UniRule"/>
</dbReference>
<dbReference type="GO" id="GO:0000105">
    <property type="term" value="P:L-histidine biosynthetic process"/>
    <property type="evidence" value="ECO:0007669"/>
    <property type="project" value="UniProtKB-UniRule"/>
</dbReference>
<dbReference type="CDD" id="cd07914">
    <property type="entry name" value="IGPD"/>
    <property type="match status" value="1"/>
</dbReference>
<dbReference type="FunFam" id="3.30.230.40:FF:000001">
    <property type="entry name" value="Imidazoleglycerol-phosphate dehydratase HisB"/>
    <property type="match status" value="1"/>
</dbReference>
<dbReference type="FunFam" id="3.30.230.40:FF:000003">
    <property type="entry name" value="Imidazoleglycerol-phosphate dehydratase HisB"/>
    <property type="match status" value="1"/>
</dbReference>
<dbReference type="Gene3D" id="3.30.230.40">
    <property type="entry name" value="Imidazole glycerol phosphate dehydratase, domain 1"/>
    <property type="match status" value="2"/>
</dbReference>
<dbReference type="HAMAP" id="MF_00076">
    <property type="entry name" value="HisB"/>
    <property type="match status" value="1"/>
</dbReference>
<dbReference type="InterPro" id="IPR038494">
    <property type="entry name" value="IGPD_sf"/>
</dbReference>
<dbReference type="InterPro" id="IPR000807">
    <property type="entry name" value="ImidazoleglycerolP_deHydtase"/>
</dbReference>
<dbReference type="InterPro" id="IPR020565">
    <property type="entry name" value="ImidazoleglycerP_deHydtase_CS"/>
</dbReference>
<dbReference type="InterPro" id="IPR020568">
    <property type="entry name" value="Ribosomal_Su5_D2-typ_SF"/>
</dbReference>
<dbReference type="NCBIfam" id="NF002106">
    <property type="entry name" value="PRK00951.1-1"/>
    <property type="match status" value="1"/>
</dbReference>
<dbReference type="NCBIfam" id="NF002109">
    <property type="entry name" value="PRK00951.1-5"/>
    <property type="match status" value="1"/>
</dbReference>
<dbReference type="NCBIfam" id="NF002111">
    <property type="entry name" value="PRK00951.2-1"/>
    <property type="match status" value="1"/>
</dbReference>
<dbReference type="NCBIfam" id="NF002114">
    <property type="entry name" value="PRK00951.2-4"/>
    <property type="match status" value="1"/>
</dbReference>
<dbReference type="PANTHER" id="PTHR23133:SF2">
    <property type="entry name" value="IMIDAZOLEGLYCEROL-PHOSPHATE DEHYDRATASE"/>
    <property type="match status" value="1"/>
</dbReference>
<dbReference type="PANTHER" id="PTHR23133">
    <property type="entry name" value="IMIDAZOLEGLYCEROL-PHOSPHATE DEHYDRATASE HIS7"/>
    <property type="match status" value="1"/>
</dbReference>
<dbReference type="Pfam" id="PF00475">
    <property type="entry name" value="IGPD"/>
    <property type="match status" value="1"/>
</dbReference>
<dbReference type="SUPFAM" id="SSF54211">
    <property type="entry name" value="Ribosomal protein S5 domain 2-like"/>
    <property type="match status" value="2"/>
</dbReference>
<dbReference type="PROSITE" id="PS00954">
    <property type="entry name" value="IGP_DEHYDRATASE_1"/>
    <property type="match status" value="1"/>
</dbReference>
<dbReference type="PROSITE" id="PS00955">
    <property type="entry name" value="IGP_DEHYDRATASE_2"/>
    <property type="match status" value="1"/>
</dbReference>
<evidence type="ECO:0000255" key="1">
    <source>
        <dbReference type="HAMAP-Rule" id="MF_00076"/>
    </source>
</evidence>
<reference key="1">
    <citation type="journal article" date="2006" name="J. Bacteriol.">
        <title>The genome sequence of the obligately chemolithoautotrophic, facultatively anaerobic bacterium Thiobacillus denitrificans.</title>
        <authorList>
            <person name="Beller H.R."/>
            <person name="Chain P.S."/>
            <person name="Letain T.E."/>
            <person name="Chakicherla A."/>
            <person name="Larimer F.W."/>
            <person name="Richardson P.M."/>
            <person name="Coleman M.A."/>
            <person name="Wood A.P."/>
            <person name="Kelly D.P."/>
        </authorList>
    </citation>
    <scope>NUCLEOTIDE SEQUENCE [LARGE SCALE GENOMIC DNA]</scope>
    <source>
        <strain>ATCC 25259 / T1</strain>
    </source>
</reference>
<protein>
    <recommendedName>
        <fullName evidence="1">Imidazoleglycerol-phosphate dehydratase</fullName>
        <shortName evidence="1">IGPD</shortName>
        <ecNumber evidence="1">4.2.1.19</ecNumber>
    </recommendedName>
</protein>
<organism>
    <name type="scientific">Thiobacillus denitrificans (strain ATCC 25259 / T1)</name>
    <dbReference type="NCBI Taxonomy" id="292415"/>
    <lineage>
        <taxon>Bacteria</taxon>
        <taxon>Pseudomonadati</taxon>
        <taxon>Pseudomonadota</taxon>
        <taxon>Betaproteobacteria</taxon>
        <taxon>Nitrosomonadales</taxon>
        <taxon>Thiobacillaceae</taxon>
        <taxon>Thiobacillus</taxon>
    </lineage>
</organism>
<keyword id="KW-0028">Amino-acid biosynthesis</keyword>
<keyword id="KW-0963">Cytoplasm</keyword>
<keyword id="KW-0368">Histidine biosynthesis</keyword>
<keyword id="KW-0456">Lyase</keyword>
<keyword id="KW-1185">Reference proteome</keyword>
<sequence>MRTAQVSRNTLETEITVSLNLDGSGTSRLATGVPFLDHMLDQIARHGLIDLDIAAKGDLHIDAHHTVEDTGITLGQAFAKALADKKGIRRYGHAYVPLDEALSRVVIDLSGRPGLEYHVDYTRARIGDFDVDLFLEFFRGFVNHAGVTLHIDNLRGINAHHQAETIFKAFGRALRMAVETDARLGDVTPSTKGAL</sequence>
<proteinExistence type="inferred from homology"/>
<feature type="chain" id="PRO_1000010369" description="Imidazoleglycerol-phosphate dehydratase">
    <location>
        <begin position="1"/>
        <end position="195"/>
    </location>
</feature>
<name>HIS7_THIDA</name>
<comment type="catalytic activity">
    <reaction evidence="1">
        <text>D-erythro-1-(imidazol-4-yl)glycerol 3-phosphate = 3-(imidazol-4-yl)-2-oxopropyl phosphate + H2O</text>
        <dbReference type="Rhea" id="RHEA:11040"/>
        <dbReference type="ChEBI" id="CHEBI:15377"/>
        <dbReference type="ChEBI" id="CHEBI:57766"/>
        <dbReference type="ChEBI" id="CHEBI:58278"/>
        <dbReference type="EC" id="4.2.1.19"/>
    </reaction>
</comment>
<comment type="pathway">
    <text evidence="1">Amino-acid biosynthesis; L-histidine biosynthesis; L-histidine from 5-phospho-alpha-D-ribose 1-diphosphate: step 6/9.</text>
</comment>
<comment type="subcellular location">
    <subcellularLocation>
        <location evidence="1">Cytoplasm</location>
    </subcellularLocation>
</comment>
<comment type="similarity">
    <text evidence="1">Belongs to the imidazoleglycerol-phosphate dehydratase family.</text>
</comment>